<evidence type="ECO:0000250" key="1"/>
<evidence type="ECO:0000255" key="2">
    <source>
        <dbReference type="PROSITE-ProRule" id="PRU00214"/>
    </source>
</evidence>
<evidence type="ECO:0000256" key="3">
    <source>
        <dbReference type="SAM" id="MobiDB-lite"/>
    </source>
</evidence>
<reference key="1">
    <citation type="submission" date="2005-12" db="EMBL/GenBank/DDBJ databases">
        <authorList>
            <consortium name="NIH - Mammalian Gene Collection (MGC) project"/>
        </authorList>
    </citation>
    <scope>NUCLEOTIDE SEQUENCE [LARGE SCALE MRNA]</scope>
    <source>
        <strain>Crossbred X Angus</strain>
        <tissue>Liver</tissue>
    </source>
</reference>
<protein>
    <recommendedName>
        <fullName>Ubiquitin-like protein 4B</fullName>
    </recommendedName>
</protein>
<feature type="chain" id="PRO_0000263700" description="Ubiquitin-like protein 4B">
    <location>
        <begin position="1"/>
        <end position="165"/>
    </location>
</feature>
<feature type="domain" description="Ubiquitin-like" evidence="2">
    <location>
        <begin position="1"/>
        <end position="76"/>
    </location>
</feature>
<feature type="region of interest" description="Disordered" evidence="3">
    <location>
        <begin position="139"/>
        <end position="165"/>
    </location>
</feature>
<feature type="compositionally biased region" description="Basic and acidic residues" evidence="3">
    <location>
        <begin position="146"/>
        <end position="165"/>
    </location>
</feature>
<organism>
    <name type="scientific">Bos taurus</name>
    <name type="common">Bovine</name>
    <dbReference type="NCBI Taxonomy" id="9913"/>
    <lineage>
        <taxon>Eukaryota</taxon>
        <taxon>Metazoa</taxon>
        <taxon>Chordata</taxon>
        <taxon>Craniata</taxon>
        <taxon>Vertebrata</taxon>
        <taxon>Euteleostomi</taxon>
        <taxon>Mammalia</taxon>
        <taxon>Eutheria</taxon>
        <taxon>Laurasiatheria</taxon>
        <taxon>Artiodactyla</taxon>
        <taxon>Ruminantia</taxon>
        <taxon>Pecora</taxon>
        <taxon>Bovidae</taxon>
        <taxon>Bovinae</taxon>
        <taxon>Bos</taxon>
    </lineage>
</organism>
<dbReference type="EMBL" id="BC111318">
    <property type="protein sequence ID" value="AAI11319.1"/>
    <property type="molecule type" value="mRNA"/>
</dbReference>
<dbReference type="RefSeq" id="NP_001074203.1">
    <property type="nucleotide sequence ID" value="NM_001080734.2"/>
</dbReference>
<dbReference type="SMR" id="Q2T9Q2"/>
<dbReference type="FunCoup" id="Q2T9Q2">
    <property type="interactions" value="28"/>
</dbReference>
<dbReference type="STRING" id="9913.ENSBTAP00000021793"/>
<dbReference type="PaxDb" id="9913-ENSBTAP00000021793"/>
<dbReference type="Ensembl" id="ENSBTAT00000021793.5">
    <property type="protein sequence ID" value="ENSBTAP00000021793.4"/>
    <property type="gene ID" value="ENSBTAG00000016389.5"/>
</dbReference>
<dbReference type="GeneID" id="529388"/>
<dbReference type="KEGG" id="bta:529388"/>
<dbReference type="CTD" id="164153"/>
<dbReference type="VEuPathDB" id="HostDB:ENSBTAG00000016389"/>
<dbReference type="VGNC" id="VGNC:36608">
    <property type="gene designation" value="UBL4B"/>
</dbReference>
<dbReference type="eggNOG" id="KOG0001">
    <property type="taxonomic scope" value="Eukaryota"/>
</dbReference>
<dbReference type="GeneTree" id="ENSGT00940000163477"/>
<dbReference type="HOGENOM" id="CLU_119809_0_0_1"/>
<dbReference type="InParanoid" id="Q2T9Q2"/>
<dbReference type="OMA" id="ASINVIM"/>
<dbReference type="OrthoDB" id="417450at2759"/>
<dbReference type="TreeFam" id="TF354228"/>
<dbReference type="Proteomes" id="UP000009136">
    <property type="component" value="Chromosome 3"/>
</dbReference>
<dbReference type="Bgee" id="ENSBTAG00000016389">
    <property type="expression patterns" value="Expressed in semen and 12 other cell types or tissues"/>
</dbReference>
<dbReference type="GO" id="GO:0005737">
    <property type="term" value="C:cytoplasm"/>
    <property type="evidence" value="ECO:0007669"/>
    <property type="project" value="UniProtKB-SubCell"/>
</dbReference>
<dbReference type="Gene3D" id="3.10.20.90">
    <property type="entry name" value="Phosphatidylinositol 3-kinase Catalytic Subunit, Chain A, domain 1"/>
    <property type="match status" value="1"/>
</dbReference>
<dbReference type="InterPro" id="IPR000626">
    <property type="entry name" value="Ubiquitin-like_dom"/>
</dbReference>
<dbReference type="InterPro" id="IPR029071">
    <property type="entry name" value="Ubiquitin-like_domsf"/>
</dbReference>
<dbReference type="InterPro" id="IPR019954">
    <property type="entry name" value="Ubiquitin_CS"/>
</dbReference>
<dbReference type="InterPro" id="IPR019956">
    <property type="entry name" value="Ubiquitin_dom"/>
</dbReference>
<dbReference type="InterPro" id="IPR041421">
    <property type="entry name" value="Ubl4_C_TUGS"/>
</dbReference>
<dbReference type="InterPro" id="IPR043317">
    <property type="entry name" value="UBL4B"/>
</dbReference>
<dbReference type="PANTHER" id="PTHR47905">
    <property type="entry name" value="UBIQUITIN-LIKE PROTEIN 4B"/>
    <property type="match status" value="1"/>
</dbReference>
<dbReference type="PANTHER" id="PTHR47905:SF1">
    <property type="entry name" value="UBIQUITIN-LIKE PROTEIN 4B"/>
    <property type="match status" value="1"/>
</dbReference>
<dbReference type="Pfam" id="PF17840">
    <property type="entry name" value="Tugs"/>
    <property type="match status" value="1"/>
</dbReference>
<dbReference type="Pfam" id="PF00240">
    <property type="entry name" value="ubiquitin"/>
    <property type="match status" value="1"/>
</dbReference>
<dbReference type="PRINTS" id="PR00348">
    <property type="entry name" value="UBIQUITIN"/>
</dbReference>
<dbReference type="SMART" id="SM00213">
    <property type="entry name" value="UBQ"/>
    <property type="match status" value="1"/>
</dbReference>
<dbReference type="SUPFAM" id="SSF54236">
    <property type="entry name" value="Ubiquitin-like"/>
    <property type="match status" value="1"/>
</dbReference>
<dbReference type="PROSITE" id="PS00299">
    <property type="entry name" value="UBIQUITIN_1"/>
    <property type="match status" value="1"/>
</dbReference>
<dbReference type="PROSITE" id="PS50053">
    <property type="entry name" value="UBIQUITIN_2"/>
    <property type="match status" value="1"/>
</dbReference>
<comment type="subcellular location">
    <subcellularLocation>
        <location evidence="1">Cytoplasm</location>
    </subcellularLocation>
</comment>
<comment type="miscellaneous">
    <text>May have arisen from retrotransposition of the X-linked UBL4A gene during mammalian evolution.</text>
</comment>
<proteinExistence type="evidence at transcript level"/>
<sequence length="165" mass="18879">MFLTVKLLLGRRCSLKVSGQESVAMLKKLVSERLHVPEEQQHLLFRGQLLADDKRLSDYRIGPNASISVVVRPLEKPAPEDTRLPQPLWHHLGQVLAKHFGPQDTEAMLQLLRREHEECLQRISLGDLEQLARYLLTKEPLAQPTGEREPEVLSPNKEEEKEAVQ</sequence>
<accession>Q2T9Q2</accession>
<name>UBL4B_BOVIN</name>
<keyword id="KW-0963">Cytoplasm</keyword>
<keyword id="KW-1185">Reference proteome</keyword>
<gene>
    <name type="primary">UBL4B</name>
</gene>